<reference key="1">
    <citation type="journal article" date="2010" name="Genome Biol.">
        <title>Structure and dynamics of the pan-genome of Streptococcus pneumoniae and closely related species.</title>
        <authorList>
            <person name="Donati C."/>
            <person name="Hiller N.L."/>
            <person name="Tettelin H."/>
            <person name="Muzzi A."/>
            <person name="Croucher N.J."/>
            <person name="Angiuoli S.V."/>
            <person name="Oggioni M."/>
            <person name="Dunning Hotopp J.C."/>
            <person name="Hu F.Z."/>
            <person name="Riley D.R."/>
            <person name="Covacci A."/>
            <person name="Mitchell T.J."/>
            <person name="Bentley S.D."/>
            <person name="Kilian M."/>
            <person name="Ehrlich G.D."/>
            <person name="Rappuoli R."/>
            <person name="Moxon E.R."/>
            <person name="Masignani V."/>
        </authorList>
    </citation>
    <scope>NUCLEOTIDE SEQUENCE [LARGE SCALE GENOMIC DNA]</scope>
    <source>
        <strain>70585</strain>
    </source>
</reference>
<proteinExistence type="inferred from homology"/>
<feature type="chain" id="PRO_1000189972" description="GTPase Era">
    <location>
        <begin position="1"/>
        <end position="299"/>
    </location>
</feature>
<feature type="domain" description="Era-type G" evidence="2">
    <location>
        <begin position="4"/>
        <end position="171"/>
    </location>
</feature>
<feature type="domain" description="KH type-2" evidence="1">
    <location>
        <begin position="202"/>
        <end position="280"/>
    </location>
</feature>
<feature type="region of interest" description="G1" evidence="2">
    <location>
        <begin position="12"/>
        <end position="19"/>
    </location>
</feature>
<feature type="region of interest" description="G2" evidence="2">
    <location>
        <begin position="38"/>
        <end position="42"/>
    </location>
</feature>
<feature type="region of interest" description="G3" evidence="2">
    <location>
        <begin position="59"/>
        <end position="62"/>
    </location>
</feature>
<feature type="region of interest" description="G4" evidence="2">
    <location>
        <begin position="121"/>
        <end position="124"/>
    </location>
</feature>
<feature type="region of interest" description="G5" evidence="2">
    <location>
        <begin position="150"/>
        <end position="152"/>
    </location>
</feature>
<feature type="binding site" evidence="1">
    <location>
        <begin position="12"/>
        <end position="19"/>
    </location>
    <ligand>
        <name>GTP</name>
        <dbReference type="ChEBI" id="CHEBI:37565"/>
    </ligand>
</feature>
<feature type="binding site" evidence="1">
    <location>
        <begin position="59"/>
        <end position="63"/>
    </location>
    <ligand>
        <name>GTP</name>
        <dbReference type="ChEBI" id="CHEBI:37565"/>
    </ligand>
</feature>
<feature type="binding site" evidence="1">
    <location>
        <begin position="121"/>
        <end position="124"/>
    </location>
    <ligand>
        <name>GTP</name>
        <dbReference type="ChEBI" id="CHEBI:37565"/>
    </ligand>
</feature>
<comment type="function">
    <text evidence="1">An essential GTPase that binds both GDP and GTP, with rapid nucleotide exchange. Plays a role in 16S rRNA processing and 30S ribosomal subunit biogenesis and possibly also in cell cycle regulation and energy metabolism.</text>
</comment>
<comment type="subunit">
    <text evidence="1">Monomer.</text>
</comment>
<comment type="subcellular location">
    <subcellularLocation>
        <location>Cytoplasm</location>
    </subcellularLocation>
    <subcellularLocation>
        <location evidence="1">Cell membrane</location>
        <topology evidence="1">Peripheral membrane protein</topology>
    </subcellularLocation>
</comment>
<comment type="similarity">
    <text evidence="1 2">Belongs to the TRAFAC class TrmE-Era-EngA-EngB-Septin-like GTPase superfamily. Era GTPase family.</text>
</comment>
<keyword id="KW-1003">Cell membrane</keyword>
<keyword id="KW-0963">Cytoplasm</keyword>
<keyword id="KW-0342">GTP-binding</keyword>
<keyword id="KW-0472">Membrane</keyword>
<keyword id="KW-0547">Nucleotide-binding</keyword>
<keyword id="KW-0690">Ribosome biogenesis</keyword>
<keyword id="KW-0694">RNA-binding</keyword>
<keyword id="KW-0699">rRNA-binding</keyword>
<gene>
    <name evidence="1" type="primary">era</name>
    <name type="ordered locus">SP70585_1009</name>
</gene>
<accession>C1C6U6</accession>
<name>ERA_STRP7</name>
<evidence type="ECO:0000255" key="1">
    <source>
        <dbReference type="HAMAP-Rule" id="MF_00367"/>
    </source>
</evidence>
<evidence type="ECO:0000255" key="2">
    <source>
        <dbReference type="PROSITE-ProRule" id="PRU01050"/>
    </source>
</evidence>
<protein>
    <recommendedName>
        <fullName evidence="1">GTPase Era</fullName>
    </recommendedName>
</protein>
<dbReference type="EMBL" id="CP000918">
    <property type="protein sequence ID" value="ACO16571.1"/>
    <property type="molecule type" value="Genomic_DNA"/>
</dbReference>
<dbReference type="RefSeq" id="WP_000143265.1">
    <property type="nucleotide sequence ID" value="NC_012468.1"/>
</dbReference>
<dbReference type="SMR" id="C1C6U6"/>
<dbReference type="GeneID" id="45653689"/>
<dbReference type="KEGG" id="snm:SP70585_1009"/>
<dbReference type="HOGENOM" id="CLU_038009_1_0_9"/>
<dbReference type="Proteomes" id="UP000002211">
    <property type="component" value="Chromosome"/>
</dbReference>
<dbReference type="GO" id="GO:0005829">
    <property type="term" value="C:cytosol"/>
    <property type="evidence" value="ECO:0007669"/>
    <property type="project" value="TreeGrafter"/>
</dbReference>
<dbReference type="GO" id="GO:0005886">
    <property type="term" value="C:plasma membrane"/>
    <property type="evidence" value="ECO:0007669"/>
    <property type="project" value="UniProtKB-SubCell"/>
</dbReference>
<dbReference type="GO" id="GO:0005525">
    <property type="term" value="F:GTP binding"/>
    <property type="evidence" value="ECO:0007669"/>
    <property type="project" value="UniProtKB-UniRule"/>
</dbReference>
<dbReference type="GO" id="GO:0003924">
    <property type="term" value="F:GTPase activity"/>
    <property type="evidence" value="ECO:0007669"/>
    <property type="project" value="UniProtKB-UniRule"/>
</dbReference>
<dbReference type="GO" id="GO:0043024">
    <property type="term" value="F:ribosomal small subunit binding"/>
    <property type="evidence" value="ECO:0007669"/>
    <property type="project" value="TreeGrafter"/>
</dbReference>
<dbReference type="GO" id="GO:0070181">
    <property type="term" value="F:small ribosomal subunit rRNA binding"/>
    <property type="evidence" value="ECO:0007669"/>
    <property type="project" value="UniProtKB-UniRule"/>
</dbReference>
<dbReference type="GO" id="GO:0000028">
    <property type="term" value="P:ribosomal small subunit assembly"/>
    <property type="evidence" value="ECO:0007669"/>
    <property type="project" value="TreeGrafter"/>
</dbReference>
<dbReference type="CDD" id="cd04163">
    <property type="entry name" value="Era"/>
    <property type="match status" value="1"/>
</dbReference>
<dbReference type="CDD" id="cd22534">
    <property type="entry name" value="KH-II_Era"/>
    <property type="match status" value="1"/>
</dbReference>
<dbReference type="FunFam" id="3.30.300.20:FF:000003">
    <property type="entry name" value="GTPase Era"/>
    <property type="match status" value="1"/>
</dbReference>
<dbReference type="FunFam" id="3.40.50.300:FF:000094">
    <property type="entry name" value="GTPase Era"/>
    <property type="match status" value="1"/>
</dbReference>
<dbReference type="Gene3D" id="3.30.300.20">
    <property type="match status" value="1"/>
</dbReference>
<dbReference type="Gene3D" id="3.40.50.300">
    <property type="entry name" value="P-loop containing nucleotide triphosphate hydrolases"/>
    <property type="match status" value="1"/>
</dbReference>
<dbReference type="HAMAP" id="MF_00367">
    <property type="entry name" value="GTPase_Era"/>
    <property type="match status" value="1"/>
</dbReference>
<dbReference type="InterPro" id="IPR030388">
    <property type="entry name" value="G_ERA_dom"/>
</dbReference>
<dbReference type="InterPro" id="IPR006073">
    <property type="entry name" value="GTP-bd"/>
</dbReference>
<dbReference type="InterPro" id="IPR005662">
    <property type="entry name" value="GTPase_Era-like"/>
</dbReference>
<dbReference type="InterPro" id="IPR015946">
    <property type="entry name" value="KH_dom-like_a/b"/>
</dbReference>
<dbReference type="InterPro" id="IPR004044">
    <property type="entry name" value="KH_dom_type_2"/>
</dbReference>
<dbReference type="InterPro" id="IPR009019">
    <property type="entry name" value="KH_sf_prok-type"/>
</dbReference>
<dbReference type="InterPro" id="IPR027417">
    <property type="entry name" value="P-loop_NTPase"/>
</dbReference>
<dbReference type="InterPro" id="IPR005225">
    <property type="entry name" value="Small_GTP-bd"/>
</dbReference>
<dbReference type="NCBIfam" id="TIGR00436">
    <property type="entry name" value="era"/>
    <property type="match status" value="1"/>
</dbReference>
<dbReference type="NCBIfam" id="NF000908">
    <property type="entry name" value="PRK00089.1"/>
    <property type="match status" value="1"/>
</dbReference>
<dbReference type="NCBIfam" id="TIGR00231">
    <property type="entry name" value="small_GTP"/>
    <property type="match status" value="1"/>
</dbReference>
<dbReference type="PANTHER" id="PTHR42698">
    <property type="entry name" value="GTPASE ERA"/>
    <property type="match status" value="1"/>
</dbReference>
<dbReference type="PANTHER" id="PTHR42698:SF1">
    <property type="entry name" value="GTPASE ERA, MITOCHONDRIAL"/>
    <property type="match status" value="1"/>
</dbReference>
<dbReference type="Pfam" id="PF07650">
    <property type="entry name" value="KH_2"/>
    <property type="match status" value="1"/>
</dbReference>
<dbReference type="Pfam" id="PF01926">
    <property type="entry name" value="MMR_HSR1"/>
    <property type="match status" value="1"/>
</dbReference>
<dbReference type="SUPFAM" id="SSF52540">
    <property type="entry name" value="P-loop containing nucleoside triphosphate hydrolases"/>
    <property type="match status" value="1"/>
</dbReference>
<dbReference type="SUPFAM" id="SSF54814">
    <property type="entry name" value="Prokaryotic type KH domain (KH-domain type II)"/>
    <property type="match status" value="1"/>
</dbReference>
<dbReference type="PROSITE" id="PS51713">
    <property type="entry name" value="G_ERA"/>
    <property type="match status" value="1"/>
</dbReference>
<dbReference type="PROSITE" id="PS50823">
    <property type="entry name" value="KH_TYPE_2"/>
    <property type="match status" value="1"/>
</dbReference>
<organism>
    <name type="scientific">Streptococcus pneumoniae (strain 70585)</name>
    <dbReference type="NCBI Taxonomy" id="488221"/>
    <lineage>
        <taxon>Bacteria</taxon>
        <taxon>Bacillati</taxon>
        <taxon>Bacillota</taxon>
        <taxon>Bacilli</taxon>
        <taxon>Lactobacillales</taxon>
        <taxon>Streptococcaceae</taxon>
        <taxon>Streptococcus</taxon>
    </lineage>
</organism>
<sequence>MTFKSGFVAILGRPNVGKSTFLNHVMGQKIAIMSDKAQTTRNKIMGIYTTDKEQIVFIDTPGIHKPKTALGDFMVESAYSTLREVDTVLFMVPADEARGKGDDMIIERLKAAKVPVILVVNKIDKVHPDQLLSQIDDFRNQMDFKEIVPISALQGNNVSRLVDILSENLDEGFQYFPSDQITDHPERFLVSEMVREKVLHLTREEIPHSVAVVVDSMKRDEETDKVHIRATIMVERDSQKGIIIGKGGAMLKKIGSMARRDIELMLGDKVFLETWVKVKKNWRDKKLDLADFGYNEREY</sequence>